<evidence type="ECO:0000250" key="1">
    <source>
        <dbReference type="UniProtKB" id="C6EVG7"/>
    </source>
</evidence>
<evidence type="ECO:0000269" key="2">
    <source>
    </source>
</evidence>
<evidence type="ECO:0000303" key="3">
    <source>
    </source>
</evidence>
<evidence type="ECO:0000305" key="4"/>
<accession>P83231</accession>
<sequence>SDSKIGNGCFGFPLDRIGSVSGLGCNRIMQNPPKKFSGE</sequence>
<proteinExistence type="evidence at protein level"/>
<feature type="peptide" id="PRO_0000045076" description="Natriuretic peptide TNP-c" evidence="2">
    <location>
        <begin position="1"/>
        <end position="39"/>
    </location>
</feature>
<feature type="disulfide bond" evidence="2">
    <location>
        <begin position="9"/>
        <end position="25"/>
    </location>
</feature>
<reference key="1">
    <citation type="journal article" date="2005" name="Biochem. Biophys. Res. Commun.">
        <title>Novel natriuretic peptides from the venom of the inland taipan (Oxyuranus microlepidotus): isolation, chemical and biological characterisation.</title>
        <authorList>
            <person name="Fry B.G."/>
            <person name="Wickramaratana J.C."/>
            <person name="Lemme S."/>
            <person name="Beuve A."/>
            <person name="Garbers D."/>
            <person name="Hodgson W.C."/>
            <person name="Alewood P.F."/>
        </authorList>
    </citation>
    <scope>PROTEIN SEQUENCE</scope>
    <scope>FUNCTION</scope>
    <scope>SUBCELLULAR LOCATION</scope>
    <scope>TISSUE SPECIFICITY</scope>
    <scope>MASS SPECTROMETRY</scope>
    <scope>DISULFIDE BOND</scope>
    <source>
        <tissue>Venom</tissue>
    </source>
</reference>
<dbReference type="SMR" id="P83231"/>
<dbReference type="GO" id="GO:0005576">
    <property type="term" value="C:extracellular region"/>
    <property type="evidence" value="ECO:0007669"/>
    <property type="project" value="UniProtKB-SubCell"/>
</dbReference>
<dbReference type="GO" id="GO:0005179">
    <property type="term" value="F:hormone activity"/>
    <property type="evidence" value="ECO:0007669"/>
    <property type="project" value="InterPro"/>
</dbReference>
<dbReference type="GO" id="GO:0090729">
    <property type="term" value="F:toxin activity"/>
    <property type="evidence" value="ECO:0007669"/>
    <property type="project" value="UniProtKB-KW"/>
</dbReference>
<dbReference type="GO" id="GO:0008217">
    <property type="term" value="P:regulation of blood pressure"/>
    <property type="evidence" value="ECO:0007669"/>
    <property type="project" value="UniProtKB-KW"/>
</dbReference>
<dbReference type="GO" id="GO:0042311">
    <property type="term" value="P:vasodilation"/>
    <property type="evidence" value="ECO:0007669"/>
    <property type="project" value="UniProtKB-KW"/>
</dbReference>
<dbReference type="InterPro" id="IPR000663">
    <property type="entry name" value="Natr_peptide"/>
</dbReference>
<dbReference type="InterPro" id="IPR030480">
    <property type="entry name" value="Natr_peptide_CS"/>
</dbReference>
<dbReference type="InterPro" id="IPR002408">
    <property type="entry name" value="Natriuretic_peptide_brain"/>
</dbReference>
<dbReference type="Pfam" id="PF00212">
    <property type="entry name" value="ANP"/>
    <property type="match status" value="1"/>
</dbReference>
<dbReference type="PRINTS" id="PR00712">
    <property type="entry name" value="BNATPEPTIDE"/>
</dbReference>
<dbReference type="SMART" id="SM00183">
    <property type="entry name" value="NAT_PEP"/>
    <property type="match status" value="1"/>
</dbReference>
<dbReference type="PROSITE" id="PS00263">
    <property type="entry name" value="NATRIURETIC_PEPTIDE"/>
    <property type="match status" value="1"/>
</dbReference>
<organism>
    <name type="scientific">Oxyuranus scutellatus canni</name>
    <name type="common">Papuan taipan</name>
    <dbReference type="NCBI Taxonomy" id="183720"/>
    <lineage>
        <taxon>Eukaryota</taxon>
        <taxon>Metazoa</taxon>
        <taxon>Chordata</taxon>
        <taxon>Craniata</taxon>
        <taxon>Vertebrata</taxon>
        <taxon>Euteleostomi</taxon>
        <taxon>Lepidosauria</taxon>
        <taxon>Squamata</taxon>
        <taxon>Bifurcata</taxon>
        <taxon>Unidentata</taxon>
        <taxon>Episquamata</taxon>
        <taxon>Toxicofera</taxon>
        <taxon>Serpentes</taxon>
        <taxon>Colubroidea</taxon>
        <taxon>Elapidae</taxon>
        <taxon>Hydrophiinae</taxon>
        <taxon>Oxyuranus</taxon>
    </lineage>
</organism>
<protein>
    <recommendedName>
        <fullName evidence="3">Natriuretic peptide TNP-c</fullName>
    </recommendedName>
    <alternativeName>
        <fullName>Taipan natriuretic peptide</fullName>
    </alternativeName>
    <alternativeName>
        <fullName>Venom natriuretic peptide OxsSNPc</fullName>
    </alternativeName>
</protein>
<name>VNPC_OXYSA</name>
<comment type="function">
    <text evidence="1 2">Exhibits vasoactive and hypotensive activity (By similarity). Produces a near complete relaxation in pre-contracted aortae by activating the natriuretic peptide receptor 1 (NPR1) (PubMed:15652496).</text>
</comment>
<comment type="subcellular location">
    <subcellularLocation>
        <location evidence="2">Secreted</location>
    </subcellularLocation>
</comment>
<comment type="tissue specificity">
    <text evidence="2">Expressed by the venom gland.</text>
</comment>
<comment type="mass spectrometry"/>
<comment type="similarity">
    <text evidence="4">Belongs to the natriuretic peptide family.</text>
</comment>
<keyword id="KW-0903">Direct protein sequencing</keyword>
<keyword id="KW-1015">Disulfide bond</keyword>
<keyword id="KW-0382">Hypotensive agent</keyword>
<keyword id="KW-0964">Secreted</keyword>
<keyword id="KW-0800">Toxin</keyword>
<keyword id="KW-0838">Vasoactive</keyword>
<keyword id="KW-0840">Vasodilator</keyword>